<gene>
    <name type="ordered locus">MG467</name>
</gene>
<sequence length="311" mass="35051">MKKGNKTVWNECIDILDNVKSPSFSANFDDYFKKSKSKPPKKNKKVLNNIKKAELKLKKKANKKQKANTLYIPPFAQQAKGIVITINKMWKNVHNDDSKQEISILSDVSLQIAYGEIVIILGSSGSGKTTLLNLIGGYDSISLGSCIVANCPLEKCTSEQLLTYRKNNLGYVYQRYNLIELLSAYDNIAISQNLIPKYQRRLDIEELAEKLDIKEILYKFPYEMSGGQKQRVAIARAIIKEPKLLLCDEPTGALDSNSAENIINLLQTINKTYKQTILMVTHDVSLTRIANRIIKISDGKIVSNQLVRPLV</sequence>
<keyword id="KW-0067">ATP-binding</keyword>
<keyword id="KW-0547">Nucleotide-binding</keyword>
<keyword id="KW-1185">Reference proteome</keyword>
<keyword id="KW-0813">Transport</keyword>
<reference key="1">
    <citation type="journal article" date="1995" name="Science">
        <title>The minimal gene complement of Mycoplasma genitalium.</title>
        <authorList>
            <person name="Fraser C.M."/>
            <person name="Gocayne J.D."/>
            <person name="White O."/>
            <person name="Adams M.D."/>
            <person name="Clayton R.A."/>
            <person name="Fleischmann R.D."/>
            <person name="Bult C.J."/>
            <person name="Kerlavage A.R."/>
            <person name="Sutton G.G."/>
            <person name="Kelley J.M."/>
            <person name="Fritchman J.L."/>
            <person name="Weidman J.F."/>
            <person name="Small K.V."/>
            <person name="Sandusky M."/>
            <person name="Fuhrmann J.L."/>
            <person name="Nguyen D.T."/>
            <person name="Utterback T.R."/>
            <person name="Saudek D.M."/>
            <person name="Phillips C.A."/>
            <person name="Merrick J.M."/>
            <person name="Tomb J.-F."/>
            <person name="Dougherty B.A."/>
            <person name="Bott K.F."/>
            <person name="Hu P.-C."/>
            <person name="Lucier T.S."/>
            <person name="Peterson S.N."/>
            <person name="Smith H.O."/>
            <person name="Hutchison C.A. III"/>
            <person name="Venter J.C."/>
        </authorList>
    </citation>
    <scope>NUCLEOTIDE SEQUENCE [LARGE SCALE GENOMIC DNA]</scope>
    <source>
        <strain>ATCC 33530 / DSM 19775 / NCTC 10195 / G37</strain>
    </source>
</reference>
<reference key="2">
    <citation type="journal article" date="1993" name="J. Bacteriol.">
        <title>A survey of the Mycoplasma genitalium genome by using random sequencing.</title>
        <authorList>
            <person name="Peterson S.N."/>
            <person name="Hu P.-C."/>
            <person name="Bott K.F."/>
            <person name="Hutchison C.A. III"/>
        </authorList>
    </citation>
    <scope>NUCLEOTIDE SEQUENCE [GENOMIC DNA] OF 14-117</scope>
    <source>
        <strain>ATCC 33530 / DSM 19775 / NCTC 10195 / G37</strain>
    </source>
</reference>
<protein>
    <recommendedName>
        <fullName>Putative ABC transporter ATP-binding protein MG467</fullName>
    </recommendedName>
</protein>
<proteinExistence type="inferred from homology"/>
<dbReference type="EMBL" id="L43967">
    <property type="protein sequence ID" value="AAC72487.1"/>
    <property type="molecule type" value="Genomic_DNA"/>
</dbReference>
<dbReference type="EMBL" id="U01741">
    <property type="protein sequence ID" value="AAD10551.1"/>
    <property type="molecule type" value="Genomic_DNA"/>
</dbReference>
<dbReference type="PIR" id="F64251">
    <property type="entry name" value="F64251"/>
</dbReference>
<dbReference type="RefSeq" id="WP_009885566.1">
    <property type="nucleotide sequence ID" value="NC_000908.2"/>
</dbReference>
<dbReference type="SMR" id="P47705"/>
<dbReference type="FunCoup" id="P47705">
    <property type="interactions" value="46"/>
</dbReference>
<dbReference type="STRING" id="243273.MG_467"/>
<dbReference type="GeneID" id="88282648"/>
<dbReference type="KEGG" id="mge:MG_467"/>
<dbReference type="eggNOG" id="COG1136">
    <property type="taxonomic scope" value="Bacteria"/>
</dbReference>
<dbReference type="HOGENOM" id="CLU_000604_1_22_14"/>
<dbReference type="InParanoid" id="P47705"/>
<dbReference type="OrthoDB" id="9802264at2"/>
<dbReference type="BioCyc" id="MGEN243273:G1GJ2-561-MONOMER"/>
<dbReference type="Proteomes" id="UP000000807">
    <property type="component" value="Chromosome"/>
</dbReference>
<dbReference type="GO" id="GO:0005524">
    <property type="term" value="F:ATP binding"/>
    <property type="evidence" value="ECO:0007669"/>
    <property type="project" value="UniProtKB-KW"/>
</dbReference>
<dbReference type="GO" id="GO:0016887">
    <property type="term" value="F:ATP hydrolysis activity"/>
    <property type="evidence" value="ECO:0007669"/>
    <property type="project" value="InterPro"/>
</dbReference>
<dbReference type="CDD" id="cd03255">
    <property type="entry name" value="ABC_MJ0796_LolCDE_FtsE"/>
    <property type="match status" value="1"/>
</dbReference>
<dbReference type="Gene3D" id="3.40.50.300">
    <property type="entry name" value="P-loop containing nucleotide triphosphate hydrolases"/>
    <property type="match status" value="1"/>
</dbReference>
<dbReference type="InterPro" id="IPR003593">
    <property type="entry name" value="AAA+_ATPase"/>
</dbReference>
<dbReference type="InterPro" id="IPR003439">
    <property type="entry name" value="ABC_transporter-like_ATP-bd"/>
</dbReference>
<dbReference type="InterPro" id="IPR017871">
    <property type="entry name" value="ABC_transporter-like_CS"/>
</dbReference>
<dbReference type="InterPro" id="IPR017911">
    <property type="entry name" value="MacB-like_ATP-bd"/>
</dbReference>
<dbReference type="InterPro" id="IPR027417">
    <property type="entry name" value="P-loop_NTPase"/>
</dbReference>
<dbReference type="PANTHER" id="PTHR42798:SF2">
    <property type="entry name" value="ABC TRANSPORTER ATP-BINDING PROTEIN MG467-RELATED"/>
    <property type="match status" value="1"/>
</dbReference>
<dbReference type="PANTHER" id="PTHR42798">
    <property type="entry name" value="LIPOPROTEIN-RELEASING SYSTEM ATP-BINDING PROTEIN LOLD"/>
    <property type="match status" value="1"/>
</dbReference>
<dbReference type="Pfam" id="PF00005">
    <property type="entry name" value="ABC_tran"/>
    <property type="match status" value="1"/>
</dbReference>
<dbReference type="SMART" id="SM00382">
    <property type="entry name" value="AAA"/>
    <property type="match status" value="1"/>
</dbReference>
<dbReference type="SUPFAM" id="SSF52540">
    <property type="entry name" value="P-loop containing nucleoside triphosphate hydrolases"/>
    <property type="match status" value="1"/>
</dbReference>
<dbReference type="PROSITE" id="PS00211">
    <property type="entry name" value="ABC_TRANSPORTER_1"/>
    <property type="match status" value="1"/>
</dbReference>
<dbReference type="PROSITE" id="PS50893">
    <property type="entry name" value="ABC_TRANSPORTER_2"/>
    <property type="match status" value="1"/>
</dbReference>
<comment type="similarity">
    <text evidence="2">Belongs to the ABC transporter superfamily.</text>
</comment>
<name>Y467_MYCGE</name>
<feature type="chain" id="PRO_0000093249" description="Putative ABC transporter ATP-binding protein MG467">
    <location>
        <begin position="1"/>
        <end position="311"/>
    </location>
</feature>
<feature type="domain" description="ABC transporter" evidence="1">
    <location>
        <begin position="84"/>
        <end position="310"/>
    </location>
</feature>
<feature type="binding site" evidence="1">
    <location>
        <begin position="122"/>
        <end position="129"/>
    </location>
    <ligand>
        <name>ATP</name>
        <dbReference type="ChEBI" id="CHEBI:30616"/>
    </ligand>
</feature>
<organism>
    <name type="scientific">Mycoplasma genitalium (strain ATCC 33530 / DSM 19775 / NCTC 10195 / G37)</name>
    <name type="common">Mycoplasmoides genitalium</name>
    <dbReference type="NCBI Taxonomy" id="243273"/>
    <lineage>
        <taxon>Bacteria</taxon>
        <taxon>Bacillati</taxon>
        <taxon>Mycoplasmatota</taxon>
        <taxon>Mycoplasmoidales</taxon>
        <taxon>Mycoplasmoidaceae</taxon>
        <taxon>Mycoplasmoides</taxon>
    </lineage>
</organism>
<evidence type="ECO:0000255" key="1">
    <source>
        <dbReference type="PROSITE-ProRule" id="PRU00434"/>
    </source>
</evidence>
<evidence type="ECO:0000305" key="2"/>
<accession>P47705</accession>